<sequence>MSRIGKRPIPIPAKVSVAIDGRLVSVKGPKGELSRELPSGVVVTQEDGNIIVSRADESRLARQRHGLSRTLVANLVEGVDSGFQKRLEIIGVGYRAQVQGTTLILNVGYSNPVQIEPPEGIQFVVENNTNVVVSGISKEVVGNTAARIRAVRPPEPYKGKGIRYAGEVVLRKAGKTGKK</sequence>
<gene>
    <name evidence="1" type="primary">rplF</name>
    <name evidence="1" type="synonym">rpl6</name>
    <name type="ordered locus">Synpcc7942_2218</name>
</gene>
<protein>
    <recommendedName>
        <fullName evidence="1">Large ribosomal subunit protein uL6</fullName>
    </recommendedName>
    <alternativeName>
        <fullName evidence="2">50S ribosomal protein L6</fullName>
    </alternativeName>
</protein>
<feature type="chain" id="PRO_0000260964" description="Large ribosomal subunit protein uL6">
    <location>
        <begin position="1"/>
        <end position="179"/>
    </location>
</feature>
<comment type="function">
    <text evidence="1">This protein binds to the 23S rRNA, and is important in its secondary structure. It is located near the subunit interface in the base of the L7/L12 stalk, and near the tRNA binding site of the peptidyltransferase center.</text>
</comment>
<comment type="subunit">
    <text evidence="1">Part of the 50S ribosomal subunit.</text>
</comment>
<comment type="similarity">
    <text evidence="1">Belongs to the universal ribosomal protein uL6 family.</text>
</comment>
<evidence type="ECO:0000255" key="1">
    <source>
        <dbReference type="HAMAP-Rule" id="MF_01365"/>
    </source>
</evidence>
<evidence type="ECO:0000305" key="2"/>
<reference key="1">
    <citation type="submission" date="2005-08" db="EMBL/GenBank/DDBJ databases">
        <title>Complete sequence of chromosome 1 of Synechococcus elongatus PCC 7942.</title>
        <authorList>
            <consortium name="US DOE Joint Genome Institute"/>
            <person name="Copeland A."/>
            <person name="Lucas S."/>
            <person name="Lapidus A."/>
            <person name="Barry K."/>
            <person name="Detter J.C."/>
            <person name="Glavina T."/>
            <person name="Hammon N."/>
            <person name="Israni S."/>
            <person name="Pitluck S."/>
            <person name="Schmutz J."/>
            <person name="Larimer F."/>
            <person name="Land M."/>
            <person name="Kyrpides N."/>
            <person name="Lykidis A."/>
            <person name="Golden S."/>
            <person name="Richardson P."/>
        </authorList>
    </citation>
    <scope>NUCLEOTIDE SEQUENCE [LARGE SCALE GENOMIC DNA]</scope>
    <source>
        <strain>ATCC 33912 / PCC 7942 / FACHB-805</strain>
    </source>
</reference>
<organism>
    <name type="scientific">Synechococcus elongatus (strain ATCC 33912 / PCC 7942 / FACHB-805)</name>
    <name type="common">Anacystis nidulans R2</name>
    <dbReference type="NCBI Taxonomy" id="1140"/>
    <lineage>
        <taxon>Bacteria</taxon>
        <taxon>Bacillati</taxon>
        <taxon>Cyanobacteriota</taxon>
        <taxon>Cyanophyceae</taxon>
        <taxon>Synechococcales</taxon>
        <taxon>Synechococcaceae</taxon>
        <taxon>Synechococcus</taxon>
    </lineage>
</organism>
<accession>Q31L21</accession>
<keyword id="KW-1185">Reference proteome</keyword>
<keyword id="KW-0687">Ribonucleoprotein</keyword>
<keyword id="KW-0689">Ribosomal protein</keyword>
<keyword id="KW-0694">RNA-binding</keyword>
<keyword id="KW-0699">rRNA-binding</keyword>
<proteinExistence type="inferred from homology"/>
<dbReference type="EMBL" id="CP000100">
    <property type="protein sequence ID" value="ABB58248.1"/>
    <property type="molecule type" value="Genomic_DNA"/>
</dbReference>
<dbReference type="RefSeq" id="WP_011244189.1">
    <property type="nucleotide sequence ID" value="NZ_JACJTX010000001.1"/>
</dbReference>
<dbReference type="SMR" id="Q31L21"/>
<dbReference type="STRING" id="1140.Synpcc7942_2218"/>
<dbReference type="PaxDb" id="1140-Synpcc7942_2218"/>
<dbReference type="GeneID" id="72431101"/>
<dbReference type="KEGG" id="syf:Synpcc7942_2218"/>
<dbReference type="eggNOG" id="COG0097">
    <property type="taxonomic scope" value="Bacteria"/>
</dbReference>
<dbReference type="HOGENOM" id="CLU_065464_1_2_3"/>
<dbReference type="OrthoDB" id="9805007at2"/>
<dbReference type="BioCyc" id="SYNEL:SYNPCC7942_2218-MONOMER"/>
<dbReference type="Proteomes" id="UP000889800">
    <property type="component" value="Chromosome"/>
</dbReference>
<dbReference type="GO" id="GO:0022625">
    <property type="term" value="C:cytosolic large ribosomal subunit"/>
    <property type="evidence" value="ECO:0007669"/>
    <property type="project" value="TreeGrafter"/>
</dbReference>
<dbReference type="GO" id="GO:0019843">
    <property type="term" value="F:rRNA binding"/>
    <property type="evidence" value="ECO:0007669"/>
    <property type="project" value="UniProtKB-UniRule"/>
</dbReference>
<dbReference type="GO" id="GO:0003735">
    <property type="term" value="F:structural constituent of ribosome"/>
    <property type="evidence" value="ECO:0007669"/>
    <property type="project" value="InterPro"/>
</dbReference>
<dbReference type="GO" id="GO:0002181">
    <property type="term" value="P:cytoplasmic translation"/>
    <property type="evidence" value="ECO:0007669"/>
    <property type="project" value="TreeGrafter"/>
</dbReference>
<dbReference type="FunFam" id="3.90.930.12:FF:000001">
    <property type="entry name" value="50S ribosomal protein L6"/>
    <property type="match status" value="1"/>
</dbReference>
<dbReference type="FunFam" id="3.90.930.12:FF:000002">
    <property type="entry name" value="50S ribosomal protein L6"/>
    <property type="match status" value="1"/>
</dbReference>
<dbReference type="Gene3D" id="3.90.930.12">
    <property type="entry name" value="Ribosomal protein L6, alpha-beta domain"/>
    <property type="match status" value="2"/>
</dbReference>
<dbReference type="HAMAP" id="MF_01365_B">
    <property type="entry name" value="Ribosomal_uL6_B"/>
    <property type="match status" value="1"/>
</dbReference>
<dbReference type="InterPro" id="IPR000702">
    <property type="entry name" value="Ribosomal_uL6-like"/>
</dbReference>
<dbReference type="InterPro" id="IPR036789">
    <property type="entry name" value="Ribosomal_uL6-like_a/b-dom_sf"/>
</dbReference>
<dbReference type="InterPro" id="IPR020040">
    <property type="entry name" value="Ribosomal_uL6_a/b-dom"/>
</dbReference>
<dbReference type="InterPro" id="IPR019906">
    <property type="entry name" value="Ribosomal_uL6_bac-type"/>
</dbReference>
<dbReference type="InterPro" id="IPR002358">
    <property type="entry name" value="Ribosomal_uL6_CS"/>
</dbReference>
<dbReference type="NCBIfam" id="TIGR03654">
    <property type="entry name" value="L6_bact"/>
    <property type="match status" value="1"/>
</dbReference>
<dbReference type="PANTHER" id="PTHR11655">
    <property type="entry name" value="60S/50S RIBOSOMAL PROTEIN L6/L9"/>
    <property type="match status" value="1"/>
</dbReference>
<dbReference type="PANTHER" id="PTHR11655:SF14">
    <property type="entry name" value="LARGE RIBOSOMAL SUBUNIT PROTEIN UL6M"/>
    <property type="match status" value="1"/>
</dbReference>
<dbReference type="Pfam" id="PF00347">
    <property type="entry name" value="Ribosomal_L6"/>
    <property type="match status" value="2"/>
</dbReference>
<dbReference type="PIRSF" id="PIRSF002162">
    <property type="entry name" value="Ribosomal_L6"/>
    <property type="match status" value="1"/>
</dbReference>
<dbReference type="PRINTS" id="PR00059">
    <property type="entry name" value="RIBOSOMALL6"/>
</dbReference>
<dbReference type="SUPFAM" id="SSF56053">
    <property type="entry name" value="Ribosomal protein L6"/>
    <property type="match status" value="2"/>
</dbReference>
<dbReference type="PROSITE" id="PS00525">
    <property type="entry name" value="RIBOSOMAL_L6_1"/>
    <property type="match status" value="1"/>
</dbReference>
<name>RL6_SYNE7</name>